<evidence type="ECO:0000255" key="1">
    <source>
        <dbReference type="HAMAP-Rule" id="MF_01058"/>
    </source>
</evidence>
<evidence type="ECO:0000256" key="2">
    <source>
        <dbReference type="SAM" id="MobiDB-lite"/>
    </source>
</evidence>
<name>YIHI_ECOUT</name>
<dbReference type="EMBL" id="CP000243">
    <property type="protein sequence ID" value="ABE09867.1"/>
    <property type="molecule type" value="Genomic_DNA"/>
</dbReference>
<dbReference type="RefSeq" id="WP_001351246.1">
    <property type="nucleotide sequence ID" value="NZ_CP064825.1"/>
</dbReference>
<dbReference type="SMR" id="Q1R447"/>
<dbReference type="KEGG" id="eci:UTI89_C4455"/>
<dbReference type="HOGENOM" id="CLU_094104_2_0_6"/>
<dbReference type="Proteomes" id="UP000001952">
    <property type="component" value="Chromosome"/>
</dbReference>
<dbReference type="GO" id="GO:0005096">
    <property type="term" value="F:GTPase activator activity"/>
    <property type="evidence" value="ECO:0007669"/>
    <property type="project" value="UniProtKB-KW"/>
</dbReference>
<dbReference type="GO" id="GO:0042254">
    <property type="term" value="P:ribosome biogenesis"/>
    <property type="evidence" value="ECO:0007669"/>
    <property type="project" value="UniProtKB-KW"/>
</dbReference>
<dbReference type="HAMAP" id="MF_01058">
    <property type="entry name" value="GAP_YihI"/>
    <property type="match status" value="1"/>
</dbReference>
<dbReference type="InterPro" id="IPR007336">
    <property type="entry name" value="YihI"/>
</dbReference>
<dbReference type="NCBIfam" id="NF003560">
    <property type="entry name" value="PRK05244.1-1"/>
    <property type="match status" value="1"/>
</dbReference>
<dbReference type="Pfam" id="PF04220">
    <property type="entry name" value="YihI"/>
    <property type="match status" value="1"/>
</dbReference>
<reference key="1">
    <citation type="journal article" date="2006" name="Proc. Natl. Acad. Sci. U.S.A.">
        <title>Identification of genes subject to positive selection in uropathogenic strains of Escherichia coli: a comparative genomics approach.</title>
        <authorList>
            <person name="Chen S.L."/>
            <person name="Hung C.-S."/>
            <person name="Xu J."/>
            <person name="Reigstad C.S."/>
            <person name="Magrini V."/>
            <person name="Sabo A."/>
            <person name="Blasiar D."/>
            <person name="Bieri T."/>
            <person name="Meyer R.R."/>
            <person name="Ozersky P."/>
            <person name="Armstrong J.R."/>
            <person name="Fulton R.S."/>
            <person name="Latreille J.P."/>
            <person name="Spieth J."/>
            <person name="Hooton T.M."/>
            <person name="Mardis E.R."/>
            <person name="Hultgren S.J."/>
            <person name="Gordon J.I."/>
        </authorList>
    </citation>
    <scope>NUCLEOTIDE SEQUENCE [LARGE SCALE GENOMIC DNA]</scope>
    <source>
        <strain>UTI89 / UPEC</strain>
    </source>
</reference>
<organism>
    <name type="scientific">Escherichia coli (strain UTI89 / UPEC)</name>
    <dbReference type="NCBI Taxonomy" id="364106"/>
    <lineage>
        <taxon>Bacteria</taxon>
        <taxon>Pseudomonadati</taxon>
        <taxon>Pseudomonadota</taxon>
        <taxon>Gammaproteobacteria</taxon>
        <taxon>Enterobacterales</taxon>
        <taxon>Enterobacteriaceae</taxon>
        <taxon>Escherichia</taxon>
    </lineage>
</organism>
<gene>
    <name evidence="1" type="primary">yihI</name>
    <name type="ordered locus">UTI89_C4455</name>
</gene>
<comment type="function">
    <text evidence="1">A GTPase-activating protein (GAP) that modifies Der/EngA GTPase function. May play a role in ribosome biogenesis.</text>
</comment>
<comment type="subunit">
    <text evidence="1">Interacts with Der.</text>
</comment>
<comment type="similarity">
    <text evidence="1">Belongs to the YihI family.</text>
</comment>
<proteinExistence type="inferred from homology"/>
<keyword id="KW-0343">GTPase activation</keyword>
<keyword id="KW-0690">Ribosome biogenesis</keyword>
<protein>
    <recommendedName>
        <fullName evidence="1">Der GTPase-activating protein YihI</fullName>
    </recommendedName>
</protein>
<accession>Q1R447</accession>
<sequence length="169" mass="19057">MKPSSSNSRSKGHAKARRKTREELDQEARDRKRQKKRRGHAPGSRAAGGNTTSGSKGQNAPKDPRIGSKTPIPLGVAEKVTKQHKPKSEKPMLSPQAELELLETDERLDALLERLEAGETLSAEEQSWVDVKLDRIDELMQKLGLSYDDDEEEEEDEKQEDMMRLLRGN</sequence>
<feature type="chain" id="PRO_1000064422" description="Der GTPase-activating protein YihI">
    <location>
        <begin position="1"/>
        <end position="169"/>
    </location>
</feature>
<feature type="region of interest" description="Disordered" evidence="2">
    <location>
        <begin position="1"/>
        <end position="99"/>
    </location>
</feature>
<feature type="region of interest" description="Disordered" evidence="2">
    <location>
        <begin position="146"/>
        <end position="169"/>
    </location>
</feature>
<feature type="compositionally biased region" description="Basic residues" evidence="2">
    <location>
        <begin position="10"/>
        <end position="19"/>
    </location>
</feature>
<feature type="compositionally biased region" description="Basic and acidic residues" evidence="2">
    <location>
        <begin position="20"/>
        <end position="30"/>
    </location>
</feature>
<feature type="compositionally biased region" description="Basic residues" evidence="2">
    <location>
        <begin position="31"/>
        <end position="40"/>
    </location>
</feature>
<feature type="compositionally biased region" description="Polar residues" evidence="2">
    <location>
        <begin position="49"/>
        <end position="58"/>
    </location>
</feature>
<feature type="compositionally biased region" description="Acidic residues" evidence="2">
    <location>
        <begin position="147"/>
        <end position="159"/>
    </location>
</feature>
<feature type="compositionally biased region" description="Basic and acidic residues" evidence="2">
    <location>
        <begin position="160"/>
        <end position="169"/>
    </location>
</feature>